<keyword id="KW-0002">3D-structure</keyword>
<keyword id="KW-0072">Autophagy</keyword>
<keyword id="KW-0966">Cell projection</keyword>
<keyword id="KW-0968">Cytoplasmic vesicle</keyword>
<keyword id="KW-0931">ER-Golgi transport</keyword>
<keyword id="KW-0333">Golgi apparatus</keyword>
<keyword id="KW-0342">GTP-binding</keyword>
<keyword id="KW-0378">Hydrolase</keyword>
<keyword id="KW-0449">Lipoprotein</keyword>
<keyword id="KW-0458">Lysosome</keyword>
<keyword id="KW-0460">Magnesium</keyword>
<keyword id="KW-0472">Membrane</keyword>
<keyword id="KW-0479">Metal-binding</keyword>
<keyword id="KW-0547">Nucleotide-binding</keyword>
<keyword id="KW-0636">Prenylation</keyword>
<keyword id="KW-0653">Protein transport</keyword>
<keyword id="KW-1185">Reference proteome</keyword>
<keyword id="KW-0770">Synapse</keyword>
<keyword id="KW-0813">Transport</keyword>
<proteinExistence type="evidence at protein level"/>
<name>RAB2_DROME</name>
<accession>O18333</accession>
<accession>Q9U5D5</accession>
<reference evidence="12" key="1">
    <citation type="journal article" date="1997" name="FEBS Lett.">
        <title>Rab proteins of Drosophila melanogaster: novel members of the Rab-protein family.</title>
        <authorList>
            <person name="Satoh A.K."/>
            <person name="Tokunaga F."/>
            <person name="Ozaki K."/>
        </authorList>
    </citation>
    <scope>NUCLEOTIDE SEQUENCE [MRNA]</scope>
    <source>
        <strain evidence="12">Oregon-R</strain>
        <tissue evidence="12">Head</tissue>
    </source>
</reference>
<reference evidence="13" key="2">
    <citation type="journal article" date="1997" name="Mol. Gen. Genet.">
        <title>Molecular cloning and characterization of Drosophila genes encoding small GTPases of the rab and rho families.</title>
        <authorList>
            <person name="Sasamura T."/>
            <person name="Kobayashi T."/>
            <person name="Kojima S."/>
            <person name="Qadota H."/>
            <person name="Ohya Y."/>
            <person name="Masai I."/>
            <person name="Hotta Y."/>
        </authorList>
    </citation>
    <scope>NUCLEOTIDE SEQUENCE [MRNA]</scope>
</reference>
<reference evidence="15" key="3">
    <citation type="journal article" date="2000" name="Science">
        <title>The genome sequence of Drosophila melanogaster.</title>
        <authorList>
            <person name="Adams M.D."/>
            <person name="Celniker S.E."/>
            <person name="Holt R.A."/>
            <person name="Evans C.A."/>
            <person name="Gocayne J.D."/>
            <person name="Amanatides P.G."/>
            <person name="Scherer S.E."/>
            <person name="Li P.W."/>
            <person name="Hoskins R.A."/>
            <person name="Galle R.F."/>
            <person name="George R.A."/>
            <person name="Lewis S.E."/>
            <person name="Richards S."/>
            <person name="Ashburner M."/>
            <person name="Henderson S.N."/>
            <person name="Sutton G.G."/>
            <person name="Wortman J.R."/>
            <person name="Yandell M.D."/>
            <person name="Zhang Q."/>
            <person name="Chen L.X."/>
            <person name="Brandon R.C."/>
            <person name="Rogers Y.-H.C."/>
            <person name="Blazej R.G."/>
            <person name="Champe M."/>
            <person name="Pfeiffer B.D."/>
            <person name="Wan K.H."/>
            <person name="Doyle C."/>
            <person name="Baxter E.G."/>
            <person name="Helt G."/>
            <person name="Nelson C.R."/>
            <person name="Miklos G.L.G."/>
            <person name="Abril J.F."/>
            <person name="Agbayani A."/>
            <person name="An H.-J."/>
            <person name="Andrews-Pfannkoch C."/>
            <person name="Baldwin D."/>
            <person name="Ballew R.M."/>
            <person name="Basu A."/>
            <person name="Baxendale J."/>
            <person name="Bayraktaroglu L."/>
            <person name="Beasley E.M."/>
            <person name="Beeson K.Y."/>
            <person name="Benos P.V."/>
            <person name="Berman B.P."/>
            <person name="Bhandari D."/>
            <person name="Bolshakov S."/>
            <person name="Borkova D."/>
            <person name="Botchan M.R."/>
            <person name="Bouck J."/>
            <person name="Brokstein P."/>
            <person name="Brottier P."/>
            <person name="Burtis K.C."/>
            <person name="Busam D.A."/>
            <person name="Butler H."/>
            <person name="Cadieu E."/>
            <person name="Center A."/>
            <person name="Chandra I."/>
            <person name="Cherry J.M."/>
            <person name="Cawley S."/>
            <person name="Dahlke C."/>
            <person name="Davenport L.B."/>
            <person name="Davies P."/>
            <person name="de Pablos B."/>
            <person name="Delcher A."/>
            <person name="Deng Z."/>
            <person name="Mays A.D."/>
            <person name="Dew I."/>
            <person name="Dietz S.M."/>
            <person name="Dodson K."/>
            <person name="Doup L.E."/>
            <person name="Downes M."/>
            <person name="Dugan-Rocha S."/>
            <person name="Dunkov B.C."/>
            <person name="Dunn P."/>
            <person name="Durbin K.J."/>
            <person name="Evangelista C.C."/>
            <person name="Ferraz C."/>
            <person name="Ferriera S."/>
            <person name="Fleischmann W."/>
            <person name="Fosler C."/>
            <person name="Gabrielian A.E."/>
            <person name="Garg N.S."/>
            <person name="Gelbart W.M."/>
            <person name="Glasser K."/>
            <person name="Glodek A."/>
            <person name="Gong F."/>
            <person name="Gorrell J.H."/>
            <person name="Gu Z."/>
            <person name="Guan P."/>
            <person name="Harris M."/>
            <person name="Harris N.L."/>
            <person name="Harvey D.A."/>
            <person name="Heiman T.J."/>
            <person name="Hernandez J.R."/>
            <person name="Houck J."/>
            <person name="Hostin D."/>
            <person name="Houston K.A."/>
            <person name="Howland T.J."/>
            <person name="Wei M.-H."/>
            <person name="Ibegwam C."/>
            <person name="Jalali M."/>
            <person name="Kalush F."/>
            <person name="Karpen G.H."/>
            <person name="Ke Z."/>
            <person name="Kennison J.A."/>
            <person name="Ketchum K.A."/>
            <person name="Kimmel B.E."/>
            <person name="Kodira C.D."/>
            <person name="Kraft C.L."/>
            <person name="Kravitz S."/>
            <person name="Kulp D."/>
            <person name="Lai Z."/>
            <person name="Lasko P."/>
            <person name="Lei Y."/>
            <person name="Levitsky A.A."/>
            <person name="Li J.H."/>
            <person name="Li Z."/>
            <person name="Liang Y."/>
            <person name="Lin X."/>
            <person name="Liu X."/>
            <person name="Mattei B."/>
            <person name="McIntosh T.C."/>
            <person name="McLeod M.P."/>
            <person name="McPherson D."/>
            <person name="Merkulov G."/>
            <person name="Milshina N.V."/>
            <person name="Mobarry C."/>
            <person name="Morris J."/>
            <person name="Moshrefi A."/>
            <person name="Mount S.M."/>
            <person name="Moy M."/>
            <person name="Murphy B."/>
            <person name="Murphy L."/>
            <person name="Muzny D.M."/>
            <person name="Nelson D.L."/>
            <person name="Nelson D.R."/>
            <person name="Nelson K.A."/>
            <person name="Nixon K."/>
            <person name="Nusskern D.R."/>
            <person name="Pacleb J.M."/>
            <person name="Palazzolo M."/>
            <person name="Pittman G.S."/>
            <person name="Pan S."/>
            <person name="Pollard J."/>
            <person name="Puri V."/>
            <person name="Reese M.G."/>
            <person name="Reinert K."/>
            <person name="Remington K."/>
            <person name="Saunders R.D.C."/>
            <person name="Scheeler F."/>
            <person name="Shen H."/>
            <person name="Shue B.C."/>
            <person name="Siden-Kiamos I."/>
            <person name="Simpson M."/>
            <person name="Skupski M.P."/>
            <person name="Smith T.J."/>
            <person name="Spier E."/>
            <person name="Spradling A.C."/>
            <person name="Stapleton M."/>
            <person name="Strong R."/>
            <person name="Sun E."/>
            <person name="Svirskas R."/>
            <person name="Tector C."/>
            <person name="Turner R."/>
            <person name="Venter E."/>
            <person name="Wang A.H."/>
            <person name="Wang X."/>
            <person name="Wang Z.-Y."/>
            <person name="Wassarman D.A."/>
            <person name="Weinstock G.M."/>
            <person name="Weissenbach J."/>
            <person name="Williams S.M."/>
            <person name="Woodage T."/>
            <person name="Worley K.C."/>
            <person name="Wu D."/>
            <person name="Yang S."/>
            <person name="Yao Q.A."/>
            <person name="Ye J."/>
            <person name="Yeh R.-F."/>
            <person name="Zaveri J.S."/>
            <person name="Zhan M."/>
            <person name="Zhang G."/>
            <person name="Zhao Q."/>
            <person name="Zheng L."/>
            <person name="Zheng X.H."/>
            <person name="Zhong F.N."/>
            <person name="Zhong W."/>
            <person name="Zhou X."/>
            <person name="Zhu S.C."/>
            <person name="Zhu X."/>
            <person name="Smith H.O."/>
            <person name="Gibbs R.A."/>
            <person name="Myers E.W."/>
            <person name="Rubin G.M."/>
            <person name="Venter J.C."/>
        </authorList>
    </citation>
    <scope>NUCLEOTIDE SEQUENCE [LARGE SCALE GENOMIC DNA]</scope>
    <source>
        <strain evidence="15">Berkeley</strain>
    </source>
</reference>
<reference evidence="15" key="4">
    <citation type="journal article" date="2002" name="Genome Biol.">
        <title>Annotation of the Drosophila melanogaster euchromatic genome: a systematic review.</title>
        <authorList>
            <person name="Misra S."/>
            <person name="Crosby M.A."/>
            <person name="Mungall C.J."/>
            <person name="Matthews B.B."/>
            <person name="Campbell K.S."/>
            <person name="Hradecky P."/>
            <person name="Huang Y."/>
            <person name="Kaminker J.S."/>
            <person name="Millburn G.H."/>
            <person name="Prochnik S.E."/>
            <person name="Smith C.D."/>
            <person name="Tupy J.L."/>
            <person name="Whitfield E.J."/>
            <person name="Bayraktaroglu L."/>
            <person name="Berman B.P."/>
            <person name="Bettencourt B.R."/>
            <person name="Celniker S.E."/>
            <person name="de Grey A.D.N.J."/>
            <person name="Drysdale R.A."/>
            <person name="Harris N.L."/>
            <person name="Richter J."/>
            <person name="Russo S."/>
            <person name="Schroeder A.J."/>
            <person name="Shu S.Q."/>
            <person name="Stapleton M."/>
            <person name="Yamada C."/>
            <person name="Ashburner M."/>
            <person name="Gelbart W.M."/>
            <person name="Rubin G.M."/>
            <person name="Lewis S.E."/>
        </authorList>
    </citation>
    <scope>GENOME REANNOTATION</scope>
    <source>
        <strain evidence="15">Berkeley</strain>
    </source>
</reference>
<reference evidence="11" key="5">
    <citation type="submission" date="2003-01" db="EMBL/GenBank/DDBJ databases">
        <authorList>
            <person name="Stapleton M."/>
            <person name="Brokstein P."/>
            <person name="Hong L."/>
            <person name="Agbayani A."/>
            <person name="Carlson J."/>
            <person name="Champe M."/>
            <person name="Chavez C."/>
            <person name="Dorsett V."/>
            <person name="Dresnek D."/>
            <person name="Farfan D."/>
            <person name="Frise E."/>
            <person name="George R."/>
            <person name="Gonzalez M."/>
            <person name="Guarin H."/>
            <person name="Kronmiller B."/>
            <person name="Li P."/>
            <person name="Liao G."/>
            <person name="Miranda A."/>
            <person name="Mungall C.J."/>
            <person name="Nunoo J."/>
            <person name="Pacleb J."/>
            <person name="Paragas V."/>
            <person name="Park S."/>
            <person name="Patel S."/>
            <person name="Phouanenavong S."/>
            <person name="Wan K."/>
            <person name="Yu C."/>
            <person name="Lewis S.E."/>
            <person name="Rubin G.M."/>
            <person name="Celniker S."/>
        </authorList>
    </citation>
    <scope>NUCLEOTIDE SEQUENCE [LARGE SCALE MRNA]</scope>
    <source>
        <strain evidence="11">Berkeley</strain>
        <tissue evidence="11">Head</tissue>
    </source>
</reference>
<reference key="6">
    <citation type="journal article" date="2017" name="Elife">
        <title>Genetic screen in Drosophila muscle identifies autophagy-mediated T-tubule remodeling and a Rab2 role in autophagy.</title>
        <authorList>
            <person name="Fujita N."/>
            <person name="Huang W."/>
            <person name="Lin T.H."/>
            <person name="Groulx J.F."/>
            <person name="Jean S."/>
            <person name="Nguyen J."/>
            <person name="Kuchitsu Y."/>
            <person name="Koyama-Honda I."/>
            <person name="Mizushima N."/>
            <person name="Fukuda M."/>
            <person name="Kiger A.A."/>
        </authorList>
    </citation>
    <scope>FUNCTION</scope>
    <scope>SUBCELLULAR LOCATION</scope>
    <scope>DISRUPTION PHENOTYPE</scope>
</reference>
<reference key="7">
    <citation type="journal article" date="2017" name="J. Cell Biol.">
        <title>Rab2 promotes autophagic and endocytic lysosomal degradation.</title>
        <authorList>
            <person name="Lorincz P."/>
            <person name="Toth S."/>
            <person name="Benko P."/>
            <person name="Lakatos Z."/>
            <person name="Boda A."/>
            <person name="Glatz G."/>
            <person name="Zobel M."/>
            <person name="Bisi S."/>
            <person name="Hegedus K."/>
            <person name="Takats S."/>
            <person name="Scita G."/>
            <person name="Juhasz G."/>
        </authorList>
    </citation>
    <scope>FUNCTION</scope>
    <scope>INTERACTION WITH VPS39 AND VPS16A</scope>
    <scope>SUBCELLULAR LOCATION</scope>
    <scope>DISRUPTION PHENOTYPE</scope>
</reference>
<reference key="8">
    <citation type="journal article" date="2019" name="Elife">
        <title>Vps8 overexpression inhibits HOPS-dependent trafficking routes by outcompeting Vps41/Lt.</title>
        <authorList>
            <person name="Lorincz P."/>
            <person name="Kenez L.A."/>
            <person name="Toth S."/>
            <person name="Kiss V."/>
            <person name="Varga A."/>
            <person name="Csizmadia T."/>
            <person name="Simon-Vecsei Z."/>
            <person name="Juhasz G."/>
        </authorList>
    </citation>
    <scope>FUNCTION</scope>
</reference>
<reference evidence="9" key="9">
    <citation type="journal article" date="2021" name="J. Cell Biol.">
        <title>Rab2 regulates presynaptic precursor vesicle biogenesis at the trans-Golgi.</title>
        <authorList>
            <person name="Goetz T.W.B."/>
            <person name="Puchkov D."/>
            <person name="Lysiuk V."/>
            <person name="Luetzkendorf J."/>
            <person name="Nikonenko A.G."/>
            <person name="Quentin C."/>
            <person name="Lehmann M."/>
            <person name="Sigrist S.J."/>
            <person name="Petzoldt A.G."/>
        </authorList>
    </citation>
    <scope>FUNCTION</scope>
    <scope>SUBCELLULAR LOCATION</scope>
    <scope>DEVELOPMENTAL STAGE</scope>
    <scope>DISRUPTION PHENOTYPE</scope>
</reference>
<reference evidence="16" key="10">
    <citation type="journal article" date="2015" name="Acta Crystallogr. F Struct. Biol. Commun.">
        <title>Structures of Drosophila melanogaster Rab2 and Rab3 bound to GMPPNP.</title>
        <authorList>
            <person name="Lardong J.A."/>
            <person name="Driller J.H."/>
            <person name="Depner H."/>
            <person name="Weise C."/>
            <person name="Petzoldt A."/>
            <person name="Wahl M.C."/>
            <person name="Sigrist S.J."/>
            <person name="Loll B."/>
        </authorList>
    </citation>
    <scope>X-RAY CRYSTALLOGRAPHY (2.00 ANGSTROMS) OF 1-172 OF MUTANT LYS-65 IN COMPLEX WITH MG(2+) AND GTP ANALOG</scope>
    <scope>MUTAGENESIS OF GLN-65</scope>
</reference>
<comment type="function">
    <text evidence="5 6 7 8">May be involved in bidirectional endoplasmic reticulum (ER) to Golgi trafficking (PubMed:33822845). Together with Rab7 involved in promoting fusion of autophagosomes and endosomes with lysosomes, probably through recruitment of the HOPS tethering complex (PubMed:28063257, PubMed:28483915, PubMed:31194677, PubMed:33822845). Involved in biosynthetic transport to lysosomes (PubMed:28483915). In larval motor neurons, mediates the biogenesis of presynaptic cargo vesicles and their long-range axonal trafficking to synaptic termini (PubMed:33822845). Not involved in axonal trafficking of mitochondria (PubMed:33822845). During vesicle biogenesis, active zone proteins (including brp/Bruchpilot) and synaptic vesicle proteins (including VGlut) are sorted from the trans-Golgi in a Rab2-dependent manner via, at least, two independent routes (PubMed:33822845). Acts upstream of Arl8 during presynaptic precursor vesicle biogenesis (PubMed:33822845). Associated with lysosomal marker positive presynaptic cargo vesicles during anterograde and retrograde axonal trafficking, probably while in its GTP-bound active state (PubMed:33822845). Involved in the delivery of presynaptic cargos, but not presynapse assembly or active zone function at synaptic termini (PubMed:33822845). Required for autophagocytosis-dependent remodeling of myofibrils and transverse-tubules (T-tubules) during metamorphosis (PubMed:28063257).</text>
</comment>
<comment type="catalytic activity">
    <molecule>Ras-related protein Rab-2</molecule>
    <reaction evidence="1">
        <text>GTP + H2O = GDP + phosphate + H(+)</text>
        <dbReference type="Rhea" id="RHEA:19669"/>
        <dbReference type="ChEBI" id="CHEBI:15377"/>
        <dbReference type="ChEBI" id="CHEBI:15378"/>
        <dbReference type="ChEBI" id="CHEBI:37565"/>
        <dbReference type="ChEBI" id="CHEBI:43474"/>
        <dbReference type="ChEBI" id="CHEBI:58189"/>
        <dbReference type="EC" id="3.6.5.2"/>
    </reaction>
</comment>
<comment type="subunit">
    <text evidence="6">Interacts (GTP-bound form) with Vps16A and Vps39; the interaction with Vps39 is probably direct.</text>
</comment>
<comment type="interaction">
    <interactant intactId="EBI-91903">
        <id>O18333</id>
    </interactant>
    <interactant intactId="EBI-164712">
        <id>Q9VKV6</id>
        <label>TBC1D16</label>
    </interactant>
    <organismsDiffer>false</organismsDiffer>
    <experiments>3</experiments>
</comment>
<comment type="subcellular location">
    <subcellularLocation>
        <location evidence="8">Vesicle</location>
    </subcellularLocation>
    <subcellularLocation>
        <location evidence="8">Cytoplasmic vesicle</location>
    </subcellularLocation>
    <subcellularLocation>
        <location evidence="8">Cell projection</location>
        <location evidence="8">Axon</location>
    </subcellularLocation>
    <subcellularLocation>
        <location evidence="8">Presynapse</location>
    </subcellularLocation>
    <subcellularLocation>
        <location evidence="8">Presynaptic active zone</location>
    </subcellularLocation>
    <subcellularLocation>
        <location evidence="8">Golgi apparatus</location>
    </subcellularLocation>
    <subcellularLocation>
        <location evidence="8">Golgi apparatus</location>
        <location evidence="8">trans-Golgi network</location>
    </subcellularLocation>
    <subcellularLocation>
        <location evidence="8">Perikaryon</location>
    </subcellularLocation>
    <subcellularLocation>
        <location evidence="5">Cytoplasmic vesicle</location>
        <location evidence="5">Autophagosome membrane</location>
        <topology evidence="9">Lipid-anchor</topology>
        <orientation evidence="9">Cytoplasmic side</orientation>
    </subcellularLocation>
    <subcellularLocation>
        <location evidence="6">Autolysosome membrane</location>
        <topology evidence="9">Lipid-anchor</topology>
        <orientation evidence="9">Cytoplasmic side</orientation>
    </subcellularLocation>
    <text evidence="5 6">Autophagosome localization is not dependent on Rab7, Syx17 or Vps39 (PubMed:28063257). Associated with autolysosomes in its active GTP-bound form (PubMed:28483915).</text>
</comment>
<comment type="developmental stage">
    <text evidence="8">Motor neurons of larval ventral nerve cords.</text>
</comment>
<comment type="disruption phenotype">
    <text evidence="5 6 8">Lethal from late second/early third instar larval stage (PubMed:28483915, PubMed:33822845). In the cortex of larval ventral nerve cords, disruption of axonal trafficking in motor neurons of presynaptic cargo, but not mitochondrial cargo (PubMed:33822845). Aggregation of presynaptic active zone proteins (e.g. brp/Bruchpilot and Rbp/RIM-binding protein), synaptic vesicle proteins (e.g. unc-13, Syt1/Synaptotagmin 1 and Dap160/intersectin) and lysosomal cargos (e.g. Lamp1) in the soma of motor neurons (PubMed:33822845). Synaptic vesicle proteins and presynaptic active zone proteins accumulate in closely apposed but separate compartments (PubMed:33822845). These aggregates correspond to vesicles accumulating at the trans-Golgi (PubMed:33822845). Reduced levels of active zone and synaptic vesicle proteins in synaptic termini of motor neurons (PubMed:33822845). Thin motor neuron synaptic terminal morphology with atypically small bouton structures (PubMed:33822845). Reduced number of active zones resulting in restricted neurotransmitter release (PubMed:33822845). No reduction in active zone size or function, suggesting presynapse assembly is not affected (PubMed:33822845). Fragmentation of the Golgi apparatus (PubMed:33822845). Sorting and membrane targeting of non-synaptic proteins from the Golgi is not affected (PubMed:33822845). Increased incidence and decreased size of autophagic organelles with decreased autophagosome-lysosome fusion in larval fat cells and reduced basal autophagic degradation (PubMed:28483915, PubMed:33822845). Conditional RNAi-mediated knock-down in muscle cells disrupts transverse-tubule (T-tubule) and myofibril remodeling in internal oblique muscles during metamorphosis from 12 to 18 hours after pupal formation, with an accumulation of nondegraded autophagosomes and enlarged amphisomes, probably due to disruption of autophagosome-lysosome fusion (PubMed:28063257). Conditional RNAi mediated knock-down in third instar larval fat body cells resulted in accumulation of late stage autophagosomes and nondegraded autolysosomes (PubMed:28063257).</text>
</comment>
<comment type="similarity">
    <text evidence="9">Belongs to the small GTPase superfamily. Rab family.</text>
</comment>
<protein>
    <recommendedName>
        <fullName evidence="9">Ras-related protein Rab-2</fullName>
        <ecNumber evidence="1">3.6.5.2</ecNumber>
    </recommendedName>
</protein>
<feature type="chain" id="PRO_0000458897" description="Ras-related protein Rab-2">
    <location>
        <begin position="1"/>
        <end position="213"/>
    </location>
</feature>
<feature type="region of interest" description="Disordered" evidence="3">
    <location>
        <begin position="190"/>
        <end position="213"/>
    </location>
</feature>
<feature type="binding site" evidence="10 16">
    <location>
        <position position="15"/>
    </location>
    <ligand>
        <name>GTP</name>
        <dbReference type="ChEBI" id="CHEBI:37565"/>
    </ligand>
</feature>
<feature type="binding site" evidence="10 16">
    <location>
        <position position="16"/>
    </location>
    <ligand>
        <name>GTP</name>
        <dbReference type="ChEBI" id="CHEBI:37565"/>
    </ligand>
</feature>
<feature type="binding site" evidence="10 16">
    <location>
        <position position="18"/>
    </location>
    <ligand>
        <name>GTP</name>
        <dbReference type="ChEBI" id="CHEBI:37565"/>
    </ligand>
</feature>
<feature type="binding site" evidence="10 16">
    <location>
        <position position="19"/>
    </location>
    <ligand>
        <name>GTP</name>
        <dbReference type="ChEBI" id="CHEBI:37565"/>
    </ligand>
</feature>
<feature type="binding site" evidence="10 16">
    <location>
        <position position="20"/>
    </location>
    <ligand>
        <name>GTP</name>
        <dbReference type="ChEBI" id="CHEBI:37565"/>
    </ligand>
</feature>
<feature type="binding site" evidence="4 16">
    <location>
        <position position="20"/>
    </location>
    <ligand>
        <name>Mg(2+)</name>
        <dbReference type="ChEBI" id="CHEBI:18420"/>
    </ligand>
</feature>
<feature type="binding site" evidence="10 16">
    <location>
        <position position="21"/>
    </location>
    <ligand>
        <name>GTP</name>
        <dbReference type="ChEBI" id="CHEBI:37565"/>
    </ligand>
</feature>
<feature type="binding site" evidence="10 16">
    <location>
        <position position="32"/>
    </location>
    <ligand>
        <name>GTP</name>
        <dbReference type="ChEBI" id="CHEBI:37565"/>
    </ligand>
</feature>
<feature type="binding site" evidence="10 16">
    <location>
        <position position="33"/>
    </location>
    <ligand>
        <name>GTP</name>
        <dbReference type="ChEBI" id="CHEBI:37565"/>
    </ligand>
</feature>
<feature type="binding site" evidence="10 16">
    <location>
        <position position="35"/>
    </location>
    <ligand>
        <name>GTP</name>
        <dbReference type="ChEBI" id="CHEBI:37565"/>
    </ligand>
</feature>
<feature type="binding site" evidence="10 16">
    <location>
        <position position="38"/>
    </location>
    <ligand>
        <name>GTP</name>
        <dbReference type="ChEBI" id="CHEBI:37565"/>
    </ligand>
</feature>
<feature type="binding site" evidence="4 16">
    <location>
        <position position="38"/>
    </location>
    <ligand>
        <name>Mg(2+)</name>
        <dbReference type="ChEBI" id="CHEBI:18420"/>
    </ligand>
</feature>
<feature type="binding site" evidence="10 16">
    <location>
        <position position="64"/>
    </location>
    <ligand>
        <name>GTP</name>
        <dbReference type="ChEBI" id="CHEBI:37565"/>
    </ligand>
</feature>
<feature type="binding site" evidence="10 16">
    <location>
        <position position="119"/>
    </location>
    <ligand>
        <name>GTP</name>
        <dbReference type="ChEBI" id="CHEBI:37565"/>
    </ligand>
</feature>
<feature type="binding site" evidence="10 16">
    <location>
        <position position="122"/>
    </location>
    <ligand>
        <name>GTP</name>
        <dbReference type="ChEBI" id="CHEBI:37565"/>
    </ligand>
</feature>
<feature type="binding site" evidence="10 16">
    <location>
        <position position="150"/>
    </location>
    <ligand>
        <name>GTP</name>
        <dbReference type="ChEBI" id="CHEBI:37565"/>
    </ligand>
</feature>
<feature type="lipid moiety-binding region" description="S-geranylgeranyl cysteine" evidence="2">
    <location>
        <position position="212"/>
    </location>
</feature>
<feature type="lipid moiety-binding region" description="S-geranylgeranyl cysteine" evidence="2">
    <location>
        <position position="213"/>
    </location>
</feature>
<feature type="mutagenesis site" description="Protein is locked into the activated GTP-bound state." evidence="4">
    <original>Q</original>
    <variation>L</variation>
    <location>
        <position position="65"/>
    </location>
</feature>
<feature type="sequence conflict" description="In Ref. 2; BAA87878." evidence="9" ref="2">
    <original>H</original>
    <variation>N</variation>
    <location>
        <position position="141"/>
    </location>
</feature>
<feature type="strand" evidence="17">
    <location>
        <begin position="4"/>
        <end position="14"/>
    </location>
</feature>
<feature type="helix" evidence="17">
    <location>
        <begin position="19"/>
        <end position="28"/>
    </location>
</feature>
<feature type="strand" evidence="17">
    <location>
        <begin position="42"/>
        <end position="50"/>
    </location>
</feature>
<feature type="strand" evidence="17">
    <location>
        <begin position="53"/>
        <end position="61"/>
    </location>
</feature>
<feature type="turn" evidence="17">
    <location>
        <begin position="66"/>
        <end position="68"/>
    </location>
</feature>
<feature type="helix" evidence="17">
    <location>
        <begin position="74"/>
        <end position="76"/>
    </location>
</feature>
<feature type="strand" evidence="17">
    <location>
        <begin position="80"/>
        <end position="87"/>
    </location>
</feature>
<feature type="helix" evidence="17">
    <location>
        <begin position="91"/>
        <end position="95"/>
    </location>
</feature>
<feature type="helix" evidence="17">
    <location>
        <begin position="97"/>
        <end position="106"/>
    </location>
</feature>
<feature type="strand" evidence="17">
    <location>
        <begin position="113"/>
        <end position="119"/>
    </location>
</feature>
<feature type="helix" evidence="17">
    <location>
        <begin position="124"/>
        <end position="126"/>
    </location>
</feature>
<feature type="helix" evidence="17">
    <location>
        <begin position="131"/>
        <end position="141"/>
    </location>
</feature>
<feature type="strand" evidence="17">
    <location>
        <begin position="144"/>
        <end position="148"/>
    </location>
</feature>
<feature type="turn" evidence="17">
    <location>
        <begin position="150"/>
        <end position="152"/>
    </location>
</feature>
<feature type="helix" evidence="17">
    <location>
        <begin position="156"/>
        <end position="171"/>
    </location>
</feature>
<evidence type="ECO:0000250" key="1">
    <source>
        <dbReference type="UniProtKB" id="P53994"/>
    </source>
</evidence>
<evidence type="ECO:0000250" key="2">
    <source>
        <dbReference type="UniProtKB" id="P61019"/>
    </source>
</evidence>
<evidence type="ECO:0000256" key="3">
    <source>
        <dbReference type="SAM" id="MobiDB-lite"/>
    </source>
</evidence>
<evidence type="ECO:0000269" key="4">
    <source>
    </source>
</evidence>
<evidence type="ECO:0000269" key="5">
    <source>
    </source>
</evidence>
<evidence type="ECO:0000269" key="6">
    <source>
    </source>
</evidence>
<evidence type="ECO:0000269" key="7">
    <source>
    </source>
</evidence>
<evidence type="ECO:0000269" key="8">
    <source>
    </source>
</evidence>
<evidence type="ECO:0000305" key="9"/>
<evidence type="ECO:0000305" key="10">
    <source>
    </source>
</evidence>
<evidence type="ECO:0000312" key="11">
    <source>
        <dbReference type="EMBL" id="AAO25075.1"/>
    </source>
</evidence>
<evidence type="ECO:0000312" key="12">
    <source>
        <dbReference type="EMBL" id="BAA21706.1"/>
    </source>
</evidence>
<evidence type="ECO:0000312" key="13">
    <source>
        <dbReference type="EMBL" id="BAA87878.1"/>
    </source>
</evidence>
<evidence type="ECO:0000312" key="14">
    <source>
        <dbReference type="FlyBase" id="FBgn0014009"/>
    </source>
</evidence>
<evidence type="ECO:0000312" key="15">
    <source>
        <dbReference type="Proteomes" id="UP000000803"/>
    </source>
</evidence>
<evidence type="ECO:0007744" key="16">
    <source>
        <dbReference type="PDB" id="4RKE"/>
    </source>
</evidence>
<evidence type="ECO:0007829" key="17">
    <source>
        <dbReference type="PDB" id="4RKE"/>
    </source>
</evidence>
<organism evidence="15">
    <name type="scientific">Drosophila melanogaster</name>
    <name type="common">Fruit fly</name>
    <dbReference type="NCBI Taxonomy" id="7227"/>
    <lineage>
        <taxon>Eukaryota</taxon>
        <taxon>Metazoa</taxon>
        <taxon>Ecdysozoa</taxon>
        <taxon>Arthropoda</taxon>
        <taxon>Hexapoda</taxon>
        <taxon>Insecta</taxon>
        <taxon>Pterygota</taxon>
        <taxon>Neoptera</taxon>
        <taxon>Endopterygota</taxon>
        <taxon>Diptera</taxon>
        <taxon>Brachycera</taxon>
        <taxon>Muscomorpha</taxon>
        <taxon>Ephydroidea</taxon>
        <taxon>Drosophilidae</taxon>
        <taxon>Drosophila</taxon>
        <taxon>Sophophora</taxon>
    </lineage>
</organism>
<dbReference type="EC" id="3.6.5.2" evidence="1"/>
<dbReference type="EMBL" id="D84313">
    <property type="protein sequence ID" value="BAA21706.1"/>
    <property type="molecule type" value="mRNA"/>
</dbReference>
<dbReference type="EMBL" id="AB035352">
    <property type="protein sequence ID" value="BAA87878.1"/>
    <property type="molecule type" value="mRNA"/>
</dbReference>
<dbReference type="EMBL" id="AE013599">
    <property type="protein sequence ID" value="AAM70817.1"/>
    <property type="molecule type" value="Genomic_DNA"/>
</dbReference>
<dbReference type="EMBL" id="AE013599">
    <property type="protein sequence ID" value="AGB93265.1"/>
    <property type="molecule type" value="Genomic_DNA"/>
</dbReference>
<dbReference type="EMBL" id="BT003315">
    <property type="protein sequence ID" value="AAO25075.1"/>
    <property type="molecule type" value="mRNA"/>
</dbReference>
<dbReference type="RefSeq" id="NP_001260732.1">
    <property type="nucleotide sequence ID" value="NM_001273803.1"/>
</dbReference>
<dbReference type="RefSeq" id="NP_477090.1">
    <property type="nucleotide sequence ID" value="NM_057742.4"/>
</dbReference>
<dbReference type="PDB" id="4RKE">
    <property type="method" value="X-ray"/>
    <property type="resolution" value="2.00 A"/>
    <property type="chains" value="A=1-172"/>
</dbReference>
<dbReference type="PDBsum" id="4RKE"/>
<dbReference type="SMR" id="O18333"/>
<dbReference type="FunCoup" id="O18333">
    <property type="interactions" value="1584"/>
</dbReference>
<dbReference type="IntAct" id="O18333">
    <property type="interactions" value="10"/>
</dbReference>
<dbReference type="STRING" id="7227.FBpp0085458"/>
<dbReference type="PaxDb" id="7227-FBpp0085458"/>
<dbReference type="DNASU" id="35577"/>
<dbReference type="EnsemblMetazoa" id="FBtr0086124">
    <property type="protein sequence ID" value="FBpp0085458"/>
    <property type="gene ID" value="FBgn0014009"/>
</dbReference>
<dbReference type="EnsemblMetazoa" id="FBtr0336658">
    <property type="protein sequence ID" value="FBpp0307641"/>
    <property type="gene ID" value="FBgn0014009"/>
</dbReference>
<dbReference type="GeneID" id="35577"/>
<dbReference type="KEGG" id="dme:Dmel_CG3269"/>
<dbReference type="UCSC" id="CG3269-RA">
    <property type="organism name" value="d. melanogaster"/>
</dbReference>
<dbReference type="AGR" id="FB:FBgn0014009"/>
<dbReference type="CTD" id="35577"/>
<dbReference type="FlyBase" id="FBgn0014009">
    <property type="gene designation" value="Rab2"/>
</dbReference>
<dbReference type="VEuPathDB" id="VectorBase:FBgn0014009"/>
<dbReference type="eggNOG" id="KOG0098">
    <property type="taxonomic scope" value="Eukaryota"/>
</dbReference>
<dbReference type="GeneTree" id="ENSGT00940000153886"/>
<dbReference type="HOGENOM" id="CLU_041217_23_1_1"/>
<dbReference type="InParanoid" id="O18333"/>
<dbReference type="OMA" id="TNATHAC"/>
<dbReference type="OrthoDB" id="9989112at2759"/>
<dbReference type="Reactome" id="R-DME-162658">
    <property type="pathway name" value="Golgi Cisternae Pericentriolar Stack Reorganization"/>
</dbReference>
<dbReference type="Reactome" id="R-DME-8873719">
    <property type="pathway name" value="RAB geranylgeranylation"/>
</dbReference>
<dbReference type="BioGRID-ORCS" id="35577">
    <property type="hits" value="0 hits in 3 CRISPR screens"/>
</dbReference>
<dbReference type="ChiTaRS" id="Rab2">
    <property type="organism name" value="fly"/>
</dbReference>
<dbReference type="EvolutionaryTrace" id="O18333"/>
<dbReference type="GenomeRNAi" id="35577"/>
<dbReference type="PRO" id="PR:O18333"/>
<dbReference type="Proteomes" id="UP000000803">
    <property type="component" value="Chromosome 2R"/>
</dbReference>
<dbReference type="Bgee" id="FBgn0014009">
    <property type="expression patterns" value="Expressed in adult anterior midgut class I enteroendocrine cell in adult midgut (Drosophila) and 281 other cell types or tissues"/>
</dbReference>
<dbReference type="ExpressionAtlas" id="O18333">
    <property type="expression patterns" value="baseline and differential"/>
</dbReference>
<dbReference type="GO" id="GO:0120281">
    <property type="term" value="C:autolysosome membrane"/>
    <property type="evidence" value="ECO:0000314"/>
    <property type="project" value="UniProtKB"/>
</dbReference>
<dbReference type="GO" id="GO:0000421">
    <property type="term" value="C:autophagosome membrane"/>
    <property type="evidence" value="ECO:0000314"/>
    <property type="project" value="UniProtKB"/>
</dbReference>
<dbReference type="GO" id="GO:0031410">
    <property type="term" value="C:cytoplasmic vesicle"/>
    <property type="evidence" value="ECO:0007669"/>
    <property type="project" value="UniProtKB-KW"/>
</dbReference>
<dbReference type="GO" id="GO:0070971">
    <property type="term" value="C:endoplasmic reticulum exit site"/>
    <property type="evidence" value="ECO:0000314"/>
    <property type="project" value="FlyBase"/>
</dbReference>
<dbReference type="GO" id="GO:0005794">
    <property type="term" value="C:Golgi apparatus"/>
    <property type="evidence" value="ECO:0000314"/>
    <property type="project" value="FlyBase"/>
</dbReference>
<dbReference type="GO" id="GO:0000139">
    <property type="term" value="C:Golgi membrane"/>
    <property type="evidence" value="ECO:0000318"/>
    <property type="project" value="GO_Central"/>
</dbReference>
<dbReference type="GO" id="GO:0043025">
    <property type="term" value="C:neuronal cell body"/>
    <property type="evidence" value="ECO:0007005"/>
    <property type="project" value="FlyBase"/>
</dbReference>
<dbReference type="GO" id="GO:0043204">
    <property type="term" value="C:perikaryon"/>
    <property type="evidence" value="ECO:0007669"/>
    <property type="project" value="UniProtKB-SubCell"/>
</dbReference>
<dbReference type="GO" id="GO:0005886">
    <property type="term" value="C:plasma membrane"/>
    <property type="evidence" value="ECO:0007005"/>
    <property type="project" value="FlyBase"/>
</dbReference>
<dbReference type="GO" id="GO:0098975">
    <property type="term" value="C:postsynapse of neuromuscular junction"/>
    <property type="evidence" value="ECO:0000314"/>
    <property type="project" value="FlyBase"/>
</dbReference>
<dbReference type="GO" id="GO:0048786">
    <property type="term" value="C:presynaptic active zone"/>
    <property type="evidence" value="ECO:0007669"/>
    <property type="project" value="UniProtKB-SubCell"/>
</dbReference>
<dbReference type="GO" id="GO:0061175">
    <property type="term" value="C:type II terminal bouton"/>
    <property type="evidence" value="ECO:0000314"/>
    <property type="project" value="FlyBase"/>
</dbReference>
<dbReference type="GO" id="GO:0031982">
    <property type="term" value="C:vesicle"/>
    <property type="evidence" value="ECO:0000250"/>
    <property type="project" value="FlyBase"/>
</dbReference>
<dbReference type="GO" id="GO:0005525">
    <property type="term" value="F:GTP binding"/>
    <property type="evidence" value="ECO:0000314"/>
    <property type="project" value="UniProtKB"/>
</dbReference>
<dbReference type="GO" id="GO:0003924">
    <property type="term" value="F:GTPase activity"/>
    <property type="evidence" value="ECO:0000250"/>
    <property type="project" value="FlyBase"/>
</dbReference>
<dbReference type="GO" id="GO:0000287">
    <property type="term" value="F:magnesium ion binding"/>
    <property type="evidence" value="ECO:0000314"/>
    <property type="project" value="UniProtKB"/>
</dbReference>
<dbReference type="GO" id="GO:0061909">
    <property type="term" value="P:autophagosome-lysosome fusion"/>
    <property type="evidence" value="ECO:0000315"/>
    <property type="project" value="UniProtKB"/>
</dbReference>
<dbReference type="GO" id="GO:0006888">
    <property type="term" value="P:endoplasmic reticulum to Golgi vesicle-mediated transport"/>
    <property type="evidence" value="ECO:0000315"/>
    <property type="project" value="FlyBase"/>
</dbReference>
<dbReference type="GO" id="GO:0008057">
    <property type="term" value="P:eye pigment granule organization"/>
    <property type="evidence" value="ECO:0000315"/>
    <property type="project" value="UniProtKB"/>
</dbReference>
<dbReference type="GO" id="GO:0009306">
    <property type="term" value="P:protein secretion"/>
    <property type="evidence" value="ECO:0000316"/>
    <property type="project" value="FlyBase"/>
</dbReference>
<dbReference type="GO" id="GO:0032482">
    <property type="term" value="P:Rab protein signal transduction"/>
    <property type="evidence" value="ECO:0000250"/>
    <property type="project" value="FlyBase"/>
</dbReference>
<dbReference type="GO" id="GO:0106104">
    <property type="term" value="P:regulation of glutamate receptor clustering"/>
    <property type="evidence" value="ECO:0000315"/>
    <property type="project" value="FlyBase"/>
</dbReference>
<dbReference type="GO" id="GO:0099175">
    <property type="term" value="P:regulation of postsynapse organization"/>
    <property type="evidence" value="ECO:0000315"/>
    <property type="project" value="FlyBase"/>
</dbReference>
<dbReference type="GO" id="GO:0160156">
    <property type="term" value="P:secretory granule-lysosome fusion"/>
    <property type="evidence" value="ECO:0000315"/>
    <property type="project" value="FlyBase"/>
</dbReference>
<dbReference type="GO" id="GO:0046718">
    <property type="term" value="P:symbiont entry into host cell"/>
    <property type="evidence" value="ECO:0007001"/>
    <property type="project" value="FlyBase"/>
</dbReference>
<dbReference type="GO" id="GO:0033292">
    <property type="term" value="P:T-tubule organization"/>
    <property type="evidence" value="ECO:0000315"/>
    <property type="project" value="UniProtKB"/>
</dbReference>
<dbReference type="GO" id="GO:0016192">
    <property type="term" value="P:vesicle-mediated transport"/>
    <property type="evidence" value="ECO:0000250"/>
    <property type="project" value="FlyBase"/>
</dbReference>
<dbReference type="CDD" id="cd01866">
    <property type="entry name" value="Rab2"/>
    <property type="match status" value="1"/>
</dbReference>
<dbReference type="FunFam" id="3.40.50.300:FF:000275">
    <property type="entry name" value="Putative ras-related protein Rab-2A"/>
    <property type="match status" value="1"/>
</dbReference>
<dbReference type="Gene3D" id="3.40.50.300">
    <property type="entry name" value="P-loop containing nucleotide triphosphate hydrolases"/>
    <property type="match status" value="1"/>
</dbReference>
<dbReference type="InterPro" id="IPR027417">
    <property type="entry name" value="P-loop_NTPase"/>
</dbReference>
<dbReference type="InterPro" id="IPR050209">
    <property type="entry name" value="Rab_GTPases_membrane_traffic"/>
</dbReference>
<dbReference type="InterPro" id="IPR005225">
    <property type="entry name" value="Small_GTP-bd"/>
</dbReference>
<dbReference type="InterPro" id="IPR001806">
    <property type="entry name" value="Small_GTPase"/>
</dbReference>
<dbReference type="NCBIfam" id="TIGR00231">
    <property type="entry name" value="small_GTP"/>
    <property type="match status" value="1"/>
</dbReference>
<dbReference type="PANTHER" id="PTHR47979">
    <property type="entry name" value="DRAB11-RELATED"/>
    <property type="match status" value="1"/>
</dbReference>
<dbReference type="Pfam" id="PF00071">
    <property type="entry name" value="Ras"/>
    <property type="match status" value="1"/>
</dbReference>
<dbReference type="PRINTS" id="PR00449">
    <property type="entry name" value="RASTRNSFRMNG"/>
</dbReference>
<dbReference type="SMART" id="SM00175">
    <property type="entry name" value="RAB"/>
    <property type="match status" value="1"/>
</dbReference>
<dbReference type="SMART" id="SM00176">
    <property type="entry name" value="RAN"/>
    <property type="match status" value="1"/>
</dbReference>
<dbReference type="SMART" id="SM00173">
    <property type="entry name" value="RAS"/>
    <property type="match status" value="1"/>
</dbReference>
<dbReference type="SMART" id="SM00174">
    <property type="entry name" value="RHO"/>
    <property type="match status" value="1"/>
</dbReference>
<dbReference type="SUPFAM" id="SSF52540">
    <property type="entry name" value="P-loop containing nucleoside triphosphate hydrolases"/>
    <property type="match status" value="1"/>
</dbReference>
<dbReference type="PROSITE" id="PS51419">
    <property type="entry name" value="RAB"/>
    <property type="match status" value="1"/>
</dbReference>
<sequence>MSYAYLFKYIIIGDTGVGKSCLLLQFTDKRFQPVHDLTIGVEFGARMITIDGKQIKLQIWDTAGQEAFRSITRSYYRGAAGALLVYDITRRETFNHLTTWLEDARQHSNSNMVIMLIGNKSDLDSRREVKKEEGEAFAREHGLVFMETSARTAANVEEAFINTAKEIYEKIQEGVFDINNEANGIKIGQQHSPTNPSLPGAGGAAGAANSGCC</sequence>
<gene>
    <name evidence="14" type="primary">Rab2</name>
    <name evidence="14" type="ORF">CG3269</name>
</gene>